<gene>
    <name evidence="1" type="primary">rodZ</name>
    <name type="ordered locus">SSPA0323</name>
</gene>
<proteinExistence type="inferred from homology"/>
<protein>
    <recommendedName>
        <fullName evidence="1">Cytoskeleton protein RodZ</fullName>
    </recommendedName>
</protein>
<comment type="function">
    <text evidence="1">Cytoskeletal protein that is involved in cell-shape control through regulation of the length of the long axis.</text>
</comment>
<comment type="subcellular location">
    <subcellularLocation>
        <location evidence="1">Cell inner membrane</location>
        <topology evidence="1">Single-pass type II membrane protein</topology>
    </subcellularLocation>
    <text evidence="1">Forms helical filaments along the long axis of the cell.</text>
</comment>
<comment type="domain">
    <text evidence="1">The helix-turn-helix (HTH) motif in the cytoplasmic domain of the N-terminus is involved in the formation of spirals to maintain the rigid rod shape. As this protein is anchored in the cytoplasmic membrane, the HTH motif may contribute to protein-protein interactions to form the RodZ helix, which is localized beneath the cytoplasmic membrane. The C-terminal domain may be critical for determination of the rod shape by probably interacting with enzymes required for synthesis of the peptidoglycan layer, including PBPs in the periplasm.</text>
</comment>
<comment type="similarity">
    <text evidence="1">Belongs to the RodZ family.</text>
</comment>
<evidence type="ECO:0000255" key="1">
    <source>
        <dbReference type="HAMAP-Rule" id="MF_02017"/>
    </source>
</evidence>
<evidence type="ECO:0000256" key="2">
    <source>
        <dbReference type="SAM" id="MobiDB-lite"/>
    </source>
</evidence>
<organism>
    <name type="scientific">Salmonella paratyphi A (strain AKU_12601)</name>
    <dbReference type="NCBI Taxonomy" id="554290"/>
    <lineage>
        <taxon>Bacteria</taxon>
        <taxon>Pseudomonadati</taxon>
        <taxon>Pseudomonadota</taxon>
        <taxon>Gammaproteobacteria</taxon>
        <taxon>Enterobacterales</taxon>
        <taxon>Enterobacteriaceae</taxon>
        <taxon>Salmonella</taxon>
    </lineage>
</organism>
<accession>B5BAY4</accession>
<dbReference type="EMBL" id="FM200053">
    <property type="protein sequence ID" value="CAR58441.1"/>
    <property type="molecule type" value="Genomic_DNA"/>
</dbReference>
<dbReference type="RefSeq" id="WP_001090890.1">
    <property type="nucleotide sequence ID" value="NC_011147.1"/>
</dbReference>
<dbReference type="SMR" id="B5BAY4"/>
<dbReference type="KEGG" id="sek:SSPA0323"/>
<dbReference type="HOGENOM" id="CLU_047530_3_1_6"/>
<dbReference type="Proteomes" id="UP000001869">
    <property type="component" value="Chromosome"/>
</dbReference>
<dbReference type="GO" id="GO:0005886">
    <property type="term" value="C:plasma membrane"/>
    <property type="evidence" value="ECO:0007669"/>
    <property type="project" value="UniProtKB-SubCell"/>
</dbReference>
<dbReference type="GO" id="GO:0003677">
    <property type="term" value="F:DNA binding"/>
    <property type="evidence" value="ECO:0007669"/>
    <property type="project" value="UniProtKB-KW"/>
</dbReference>
<dbReference type="GO" id="GO:0008360">
    <property type="term" value="P:regulation of cell shape"/>
    <property type="evidence" value="ECO:0007669"/>
    <property type="project" value="UniProtKB-UniRule"/>
</dbReference>
<dbReference type="CDD" id="cd00093">
    <property type="entry name" value="HTH_XRE"/>
    <property type="match status" value="1"/>
</dbReference>
<dbReference type="FunFam" id="1.10.260.40:FF:000014">
    <property type="entry name" value="Cytoskeleton protein RodZ"/>
    <property type="match status" value="1"/>
</dbReference>
<dbReference type="Gene3D" id="1.10.260.40">
    <property type="entry name" value="lambda repressor-like DNA-binding domains"/>
    <property type="match status" value="1"/>
</dbReference>
<dbReference type="HAMAP" id="MF_02017">
    <property type="entry name" value="RodZ"/>
    <property type="match status" value="1"/>
</dbReference>
<dbReference type="InterPro" id="IPR050400">
    <property type="entry name" value="Bact_Cytoskel_RodZ"/>
</dbReference>
<dbReference type="InterPro" id="IPR001387">
    <property type="entry name" value="Cro/C1-type_HTH"/>
</dbReference>
<dbReference type="InterPro" id="IPR010982">
    <property type="entry name" value="Lambda_DNA-bd_dom_sf"/>
</dbReference>
<dbReference type="InterPro" id="IPR023690">
    <property type="entry name" value="RodZ"/>
</dbReference>
<dbReference type="InterPro" id="IPR025194">
    <property type="entry name" value="RodZ-like_C"/>
</dbReference>
<dbReference type="NCBIfam" id="NF008109">
    <property type="entry name" value="PRK10856.1"/>
    <property type="match status" value="1"/>
</dbReference>
<dbReference type="PANTHER" id="PTHR34475">
    <property type="match status" value="1"/>
</dbReference>
<dbReference type="PANTHER" id="PTHR34475:SF1">
    <property type="entry name" value="CYTOSKELETON PROTEIN RODZ"/>
    <property type="match status" value="1"/>
</dbReference>
<dbReference type="Pfam" id="PF13413">
    <property type="entry name" value="HTH_25"/>
    <property type="match status" value="1"/>
</dbReference>
<dbReference type="Pfam" id="PF13464">
    <property type="entry name" value="RodZ_C"/>
    <property type="match status" value="1"/>
</dbReference>
<dbReference type="SMART" id="SM00530">
    <property type="entry name" value="HTH_XRE"/>
    <property type="match status" value="1"/>
</dbReference>
<dbReference type="SUPFAM" id="SSF47413">
    <property type="entry name" value="lambda repressor-like DNA-binding domains"/>
    <property type="match status" value="1"/>
</dbReference>
<dbReference type="PROSITE" id="PS50943">
    <property type="entry name" value="HTH_CROC1"/>
    <property type="match status" value="1"/>
</dbReference>
<sequence>MNTEATHDQNEAQTTGVRLRNAREQLGLSQQAVAERLCLKVSTVRDIEEDKAPSDLASTFLRGYIRSYARLVHVPEEELLPGLEKQAPLRAAKVAPMQSFSLGKRRKKRDGWLMSFTWLVLFVVVGLTGAWWWQNHKAQQEEITTMADQSTAELNADKDSGQSVPLDTGAATSQDTTPAQTAPAPATPVDSTAATQTPAPTAAATQNTVVAPSQANVDTAATSAAPAATETPSALPTSQAGVAAPAADPNALVMNFTADCWLEVTDATGKKLFSGMQRKDGNLNLTGQAPYKLKIGAPAAVQIQYQGKPVDLSRFIRTNQVARLTLNAEPTPAQ</sequence>
<reference key="1">
    <citation type="journal article" date="2009" name="BMC Genomics">
        <title>Pseudogene accumulation in the evolutionary histories of Salmonella enterica serovars Paratyphi A and Typhi.</title>
        <authorList>
            <person name="Holt K.E."/>
            <person name="Thomson N.R."/>
            <person name="Wain J."/>
            <person name="Langridge G.C."/>
            <person name="Hasan R."/>
            <person name="Bhutta Z.A."/>
            <person name="Quail M.A."/>
            <person name="Norbertczak H."/>
            <person name="Walker D."/>
            <person name="Simmonds M."/>
            <person name="White B."/>
            <person name="Bason N."/>
            <person name="Mungall K."/>
            <person name="Dougan G."/>
            <person name="Parkhill J."/>
        </authorList>
    </citation>
    <scope>NUCLEOTIDE SEQUENCE [LARGE SCALE GENOMIC DNA]</scope>
    <source>
        <strain>AKU_12601</strain>
    </source>
</reference>
<keyword id="KW-0997">Cell inner membrane</keyword>
<keyword id="KW-1003">Cell membrane</keyword>
<keyword id="KW-0133">Cell shape</keyword>
<keyword id="KW-0238">DNA-binding</keyword>
<keyword id="KW-0472">Membrane</keyword>
<keyword id="KW-0735">Signal-anchor</keyword>
<keyword id="KW-0812">Transmembrane</keyword>
<keyword id="KW-1133">Transmembrane helix</keyword>
<name>RODZ_SALPK</name>
<feature type="chain" id="PRO_0000361856" description="Cytoskeleton protein RodZ">
    <location>
        <begin position="1"/>
        <end position="334"/>
    </location>
</feature>
<feature type="topological domain" description="Cytoplasmic" evidence="1">
    <location>
        <begin position="1"/>
        <end position="111"/>
    </location>
</feature>
<feature type="transmembrane region" description="Helical; Signal-anchor for type II membrane protein" evidence="1">
    <location>
        <begin position="112"/>
        <end position="132"/>
    </location>
</feature>
<feature type="topological domain" description="Periplasmic" evidence="1">
    <location>
        <begin position="133"/>
        <end position="334"/>
    </location>
</feature>
<feature type="domain" description="HTH cro/C1-type" evidence="1">
    <location>
        <begin position="19"/>
        <end position="71"/>
    </location>
</feature>
<feature type="DNA-binding region" description="H-T-H motif" evidence="1">
    <location>
        <begin position="30"/>
        <end position="49"/>
    </location>
</feature>
<feature type="region of interest" description="Disordered" evidence="2">
    <location>
        <begin position="155"/>
        <end position="241"/>
    </location>
</feature>
<feature type="compositionally biased region" description="Low complexity" evidence="2">
    <location>
        <begin position="170"/>
        <end position="211"/>
    </location>
</feature>
<feature type="compositionally biased region" description="Low complexity" evidence="2">
    <location>
        <begin position="219"/>
        <end position="241"/>
    </location>
</feature>